<name>CP086_HUMAN</name>
<reference key="1">
    <citation type="journal article" date="2004" name="Nat. Genet.">
        <title>Complete sequencing and characterization of 21,243 full-length human cDNAs.</title>
        <authorList>
            <person name="Ota T."/>
            <person name="Suzuki Y."/>
            <person name="Nishikawa T."/>
            <person name="Otsuki T."/>
            <person name="Sugiyama T."/>
            <person name="Irie R."/>
            <person name="Wakamatsu A."/>
            <person name="Hayashi K."/>
            <person name="Sato H."/>
            <person name="Nagai K."/>
            <person name="Kimura K."/>
            <person name="Makita H."/>
            <person name="Sekine M."/>
            <person name="Obayashi M."/>
            <person name="Nishi T."/>
            <person name="Shibahara T."/>
            <person name="Tanaka T."/>
            <person name="Ishii S."/>
            <person name="Yamamoto J."/>
            <person name="Saito K."/>
            <person name="Kawai Y."/>
            <person name="Isono Y."/>
            <person name="Nakamura Y."/>
            <person name="Nagahari K."/>
            <person name="Murakami K."/>
            <person name="Yasuda T."/>
            <person name="Iwayanagi T."/>
            <person name="Wagatsuma M."/>
            <person name="Shiratori A."/>
            <person name="Sudo H."/>
            <person name="Hosoiri T."/>
            <person name="Kaku Y."/>
            <person name="Kodaira H."/>
            <person name="Kondo H."/>
            <person name="Sugawara M."/>
            <person name="Takahashi M."/>
            <person name="Kanda K."/>
            <person name="Yokoi T."/>
            <person name="Furuya T."/>
            <person name="Kikkawa E."/>
            <person name="Omura Y."/>
            <person name="Abe K."/>
            <person name="Kamihara K."/>
            <person name="Katsuta N."/>
            <person name="Sato K."/>
            <person name="Tanikawa M."/>
            <person name="Yamazaki M."/>
            <person name="Ninomiya K."/>
            <person name="Ishibashi T."/>
            <person name="Yamashita H."/>
            <person name="Murakawa K."/>
            <person name="Fujimori K."/>
            <person name="Tanai H."/>
            <person name="Kimata M."/>
            <person name="Watanabe M."/>
            <person name="Hiraoka S."/>
            <person name="Chiba Y."/>
            <person name="Ishida S."/>
            <person name="Ono Y."/>
            <person name="Takiguchi S."/>
            <person name="Watanabe S."/>
            <person name="Yosida M."/>
            <person name="Hotuta T."/>
            <person name="Kusano J."/>
            <person name="Kanehori K."/>
            <person name="Takahashi-Fujii A."/>
            <person name="Hara H."/>
            <person name="Tanase T.-O."/>
            <person name="Nomura Y."/>
            <person name="Togiya S."/>
            <person name="Komai F."/>
            <person name="Hara R."/>
            <person name="Takeuchi K."/>
            <person name="Arita M."/>
            <person name="Imose N."/>
            <person name="Musashino K."/>
            <person name="Yuuki H."/>
            <person name="Oshima A."/>
            <person name="Sasaki N."/>
            <person name="Aotsuka S."/>
            <person name="Yoshikawa Y."/>
            <person name="Matsunawa H."/>
            <person name="Ichihara T."/>
            <person name="Shiohata N."/>
            <person name="Sano S."/>
            <person name="Moriya S."/>
            <person name="Momiyama H."/>
            <person name="Satoh N."/>
            <person name="Takami S."/>
            <person name="Terashima Y."/>
            <person name="Suzuki O."/>
            <person name="Nakagawa S."/>
            <person name="Senoh A."/>
            <person name="Mizoguchi H."/>
            <person name="Goto Y."/>
            <person name="Shimizu F."/>
            <person name="Wakebe H."/>
            <person name="Hishigaki H."/>
            <person name="Watanabe T."/>
            <person name="Sugiyama A."/>
            <person name="Takemoto M."/>
            <person name="Kawakami B."/>
            <person name="Yamazaki M."/>
            <person name="Watanabe K."/>
            <person name="Kumagai A."/>
            <person name="Itakura S."/>
            <person name="Fukuzumi Y."/>
            <person name="Fujimori Y."/>
            <person name="Komiyama M."/>
            <person name="Tashiro H."/>
            <person name="Tanigami A."/>
            <person name="Fujiwara T."/>
            <person name="Ono T."/>
            <person name="Yamada K."/>
            <person name="Fujii Y."/>
            <person name="Ozaki K."/>
            <person name="Hirao M."/>
            <person name="Ohmori Y."/>
            <person name="Kawabata A."/>
            <person name="Hikiji T."/>
            <person name="Kobatake N."/>
            <person name="Inagaki H."/>
            <person name="Ikema Y."/>
            <person name="Okamoto S."/>
            <person name="Okitani R."/>
            <person name="Kawakami T."/>
            <person name="Noguchi S."/>
            <person name="Itoh T."/>
            <person name="Shigeta K."/>
            <person name="Senba T."/>
            <person name="Matsumura K."/>
            <person name="Nakajima Y."/>
            <person name="Mizuno T."/>
            <person name="Morinaga M."/>
            <person name="Sasaki M."/>
            <person name="Togashi T."/>
            <person name="Oyama M."/>
            <person name="Hata H."/>
            <person name="Watanabe M."/>
            <person name="Komatsu T."/>
            <person name="Mizushima-Sugano J."/>
            <person name="Satoh T."/>
            <person name="Shirai Y."/>
            <person name="Takahashi Y."/>
            <person name="Nakagawa K."/>
            <person name="Okumura K."/>
            <person name="Nagase T."/>
            <person name="Nomura N."/>
            <person name="Kikuchi H."/>
            <person name="Masuho Y."/>
            <person name="Yamashita R."/>
            <person name="Nakai K."/>
            <person name="Yada T."/>
            <person name="Nakamura Y."/>
            <person name="Ohara O."/>
            <person name="Isogai T."/>
            <person name="Sugano S."/>
        </authorList>
    </citation>
    <scope>NUCLEOTIDE SEQUENCE [LARGE SCALE MRNA]</scope>
</reference>
<reference key="2">
    <citation type="journal article" date="2004" name="Nature">
        <title>The sequence and analysis of duplication-rich human chromosome 16.</title>
        <authorList>
            <person name="Martin J."/>
            <person name="Han C."/>
            <person name="Gordon L.A."/>
            <person name="Terry A."/>
            <person name="Prabhakar S."/>
            <person name="She X."/>
            <person name="Xie G."/>
            <person name="Hellsten U."/>
            <person name="Chan Y.M."/>
            <person name="Altherr M."/>
            <person name="Couronne O."/>
            <person name="Aerts A."/>
            <person name="Bajorek E."/>
            <person name="Black S."/>
            <person name="Blumer H."/>
            <person name="Branscomb E."/>
            <person name="Brown N.C."/>
            <person name="Bruno W.J."/>
            <person name="Buckingham J.M."/>
            <person name="Callen D.F."/>
            <person name="Campbell C.S."/>
            <person name="Campbell M.L."/>
            <person name="Campbell E.W."/>
            <person name="Caoile C."/>
            <person name="Challacombe J.F."/>
            <person name="Chasteen L.A."/>
            <person name="Chertkov O."/>
            <person name="Chi H.C."/>
            <person name="Christensen M."/>
            <person name="Clark L.M."/>
            <person name="Cohn J.D."/>
            <person name="Denys M."/>
            <person name="Detter J.C."/>
            <person name="Dickson M."/>
            <person name="Dimitrijevic-Bussod M."/>
            <person name="Escobar J."/>
            <person name="Fawcett J.J."/>
            <person name="Flowers D."/>
            <person name="Fotopulos D."/>
            <person name="Glavina T."/>
            <person name="Gomez M."/>
            <person name="Gonzales E."/>
            <person name="Goodstein D."/>
            <person name="Goodwin L.A."/>
            <person name="Grady D.L."/>
            <person name="Grigoriev I."/>
            <person name="Groza M."/>
            <person name="Hammon N."/>
            <person name="Hawkins T."/>
            <person name="Haydu L."/>
            <person name="Hildebrand C.E."/>
            <person name="Huang W."/>
            <person name="Israni S."/>
            <person name="Jett J."/>
            <person name="Jewett P.B."/>
            <person name="Kadner K."/>
            <person name="Kimball H."/>
            <person name="Kobayashi A."/>
            <person name="Krawczyk M.-C."/>
            <person name="Leyba T."/>
            <person name="Longmire J.L."/>
            <person name="Lopez F."/>
            <person name="Lou Y."/>
            <person name="Lowry S."/>
            <person name="Ludeman T."/>
            <person name="Manohar C.F."/>
            <person name="Mark G.A."/>
            <person name="McMurray K.L."/>
            <person name="Meincke L.J."/>
            <person name="Morgan J."/>
            <person name="Moyzis R.K."/>
            <person name="Mundt M.O."/>
            <person name="Munk A.C."/>
            <person name="Nandkeshwar R.D."/>
            <person name="Pitluck S."/>
            <person name="Pollard M."/>
            <person name="Predki P."/>
            <person name="Parson-Quintana B."/>
            <person name="Ramirez L."/>
            <person name="Rash S."/>
            <person name="Retterer J."/>
            <person name="Ricke D.O."/>
            <person name="Robinson D.L."/>
            <person name="Rodriguez A."/>
            <person name="Salamov A."/>
            <person name="Saunders E.H."/>
            <person name="Scott D."/>
            <person name="Shough T."/>
            <person name="Stallings R.L."/>
            <person name="Stalvey M."/>
            <person name="Sutherland R.D."/>
            <person name="Tapia R."/>
            <person name="Tesmer J.G."/>
            <person name="Thayer N."/>
            <person name="Thompson L.S."/>
            <person name="Tice H."/>
            <person name="Torney D.C."/>
            <person name="Tran-Gyamfi M."/>
            <person name="Tsai M."/>
            <person name="Ulanovsky L.E."/>
            <person name="Ustaszewska A."/>
            <person name="Vo N."/>
            <person name="White P.S."/>
            <person name="Williams A.L."/>
            <person name="Wills P.L."/>
            <person name="Wu J.-R."/>
            <person name="Wu K."/>
            <person name="Yang J."/>
            <person name="DeJong P."/>
            <person name="Bruce D."/>
            <person name="Doggett N.A."/>
            <person name="Deaven L."/>
            <person name="Schmutz J."/>
            <person name="Grimwood J."/>
            <person name="Richardson P."/>
            <person name="Rokhsar D.S."/>
            <person name="Eichler E.E."/>
            <person name="Gilna P."/>
            <person name="Lucas S.M."/>
            <person name="Myers R.M."/>
            <person name="Rubin E.M."/>
            <person name="Pennacchio L.A."/>
        </authorList>
    </citation>
    <scope>NUCLEOTIDE SEQUENCE [LARGE SCALE GENOMIC DNA]</scope>
</reference>
<reference key="3">
    <citation type="submission" date="2005-07" db="EMBL/GenBank/DDBJ databases">
        <authorList>
            <person name="Mural R.J."/>
            <person name="Istrail S."/>
            <person name="Sutton G.G."/>
            <person name="Florea L."/>
            <person name="Halpern A.L."/>
            <person name="Mobarry C.M."/>
            <person name="Lippert R."/>
            <person name="Walenz B."/>
            <person name="Shatkay H."/>
            <person name="Dew I."/>
            <person name="Miller J.R."/>
            <person name="Flanigan M.J."/>
            <person name="Edwards N.J."/>
            <person name="Bolanos R."/>
            <person name="Fasulo D."/>
            <person name="Halldorsson B.V."/>
            <person name="Hannenhalli S."/>
            <person name="Turner R."/>
            <person name="Yooseph S."/>
            <person name="Lu F."/>
            <person name="Nusskern D.R."/>
            <person name="Shue B.C."/>
            <person name="Zheng X.H."/>
            <person name="Zhong F."/>
            <person name="Delcher A.L."/>
            <person name="Huson D.H."/>
            <person name="Kravitz S.A."/>
            <person name="Mouchard L."/>
            <person name="Reinert K."/>
            <person name="Remington K.A."/>
            <person name="Clark A.G."/>
            <person name="Waterman M.S."/>
            <person name="Eichler E.E."/>
            <person name="Adams M.D."/>
            <person name="Hunkapiller M.W."/>
            <person name="Myers E.W."/>
            <person name="Venter J.C."/>
        </authorList>
    </citation>
    <scope>NUCLEOTIDE SEQUENCE [LARGE SCALE GENOMIC DNA]</scope>
</reference>
<gene>
    <name type="primary">C16orf86</name>
</gene>
<accession>Q6ZW13</accession>
<accession>B5MCW6</accession>
<evidence type="ECO:0000256" key="1">
    <source>
        <dbReference type="SAM" id="MobiDB-lite"/>
    </source>
</evidence>
<evidence type="ECO:0000305" key="2"/>
<feature type="chain" id="PRO_0000318961" description="Uncharacterized protein C16orf86">
    <location>
        <begin position="1"/>
        <end position="317"/>
    </location>
</feature>
<feature type="region of interest" description="Disordered" evidence="1">
    <location>
        <begin position="1"/>
        <end position="164"/>
    </location>
</feature>
<feature type="compositionally biased region" description="Basic and acidic residues" evidence="1">
    <location>
        <begin position="1"/>
        <end position="11"/>
    </location>
</feature>
<feature type="compositionally biased region" description="Polar residues" evidence="1">
    <location>
        <begin position="19"/>
        <end position="34"/>
    </location>
</feature>
<feature type="compositionally biased region" description="Basic and acidic residues" evidence="1">
    <location>
        <begin position="47"/>
        <end position="58"/>
    </location>
</feature>
<feature type="compositionally biased region" description="Basic and acidic residues" evidence="1">
    <location>
        <begin position="71"/>
        <end position="92"/>
    </location>
</feature>
<feature type="compositionally biased region" description="Basic residues" evidence="1">
    <location>
        <begin position="100"/>
        <end position="110"/>
    </location>
</feature>
<feature type="compositionally biased region" description="Basic residues" evidence="1">
    <location>
        <begin position="151"/>
        <end position="161"/>
    </location>
</feature>
<keyword id="KW-1267">Proteomics identification</keyword>
<keyword id="KW-1185">Reference proteome</keyword>
<protein>
    <recommendedName>
        <fullName>Uncharacterized protein C16orf86</fullName>
    </recommendedName>
</protein>
<sequence length="317" mass="33511">MASAGAERRPGVQEATVVGQGQLTEEPGSAQTSECPVAGDQFLVPAHEARGTQSEDQRPAGAASESELQEEGPKLGEERPKPHAGALEERGPRPVVSIVRPRHGPKRKPVKSLSLPGLRAHLKAEAELPPKLPLQEEEPEDSQSEPSPSAKQHKKAKKRKSLGAPVLHAVASMVSAPLETLRLERKAQRLRPLYQYVNYCNPELNQAGKGDGEAEVEAEAELAPVPEEGGVEQLQALLPLAGELGPGLALPCPSPLVTPTHALAPLGEEAGEEPGGLPSLGVSDHKAEVDKSTQVDIDKMLSVCTAPLVPPLSPQYK</sequence>
<proteinExistence type="evidence at protein level"/>
<comment type="sequence caution" evidence="2">
    <conflict type="miscellaneous discrepancy">
        <sequence resource="EMBL-CDS" id="BAC85694"/>
    </conflict>
    <text>Intron retention.</text>
</comment>
<organism>
    <name type="scientific">Homo sapiens</name>
    <name type="common">Human</name>
    <dbReference type="NCBI Taxonomy" id="9606"/>
    <lineage>
        <taxon>Eukaryota</taxon>
        <taxon>Metazoa</taxon>
        <taxon>Chordata</taxon>
        <taxon>Craniata</taxon>
        <taxon>Vertebrata</taxon>
        <taxon>Euteleostomi</taxon>
        <taxon>Mammalia</taxon>
        <taxon>Eutheria</taxon>
        <taxon>Euarchontoglires</taxon>
        <taxon>Primates</taxon>
        <taxon>Haplorrhini</taxon>
        <taxon>Catarrhini</taxon>
        <taxon>Hominidae</taxon>
        <taxon>Homo</taxon>
    </lineage>
</organism>
<dbReference type="EMBL" id="AK123796">
    <property type="protein sequence ID" value="BAC85694.1"/>
    <property type="status" value="ALT_SEQ"/>
    <property type="molecule type" value="mRNA"/>
</dbReference>
<dbReference type="EMBL" id="AC010530">
    <property type="status" value="NOT_ANNOTATED_CDS"/>
    <property type="molecule type" value="Genomic_DNA"/>
</dbReference>
<dbReference type="EMBL" id="CH471092">
    <property type="protein sequence ID" value="EAW83162.1"/>
    <property type="molecule type" value="Genomic_DNA"/>
</dbReference>
<dbReference type="EMBL" id="CH471092">
    <property type="protein sequence ID" value="EAW83163.1"/>
    <property type="molecule type" value="Genomic_DNA"/>
</dbReference>
<dbReference type="CCDS" id="CCDS32468.2"/>
<dbReference type="RefSeq" id="NP_001013002.2">
    <property type="nucleotide sequence ID" value="NM_001012984.3"/>
</dbReference>
<dbReference type="FunCoup" id="Q6ZW13">
    <property type="interactions" value="9"/>
</dbReference>
<dbReference type="STRING" id="9606.ENSP00000384117"/>
<dbReference type="iPTMnet" id="Q6ZW13"/>
<dbReference type="PhosphoSitePlus" id="Q6ZW13"/>
<dbReference type="BioMuta" id="C16orf86"/>
<dbReference type="DMDM" id="313104092"/>
<dbReference type="MassIVE" id="Q6ZW13"/>
<dbReference type="PaxDb" id="9606-ENSP00000384117"/>
<dbReference type="PeptideAtlas" id="Q6ZW13"/>
<dbReference type="ProteomicsDB" id="68452"/>
<dbReference type="Antibodypedia" id="49357">
    <property type="antibodies" value="5 antibodies from 5 providers"/>
</dbReference>
<dbReference type="DNASU" id="388284"/>
<dbReference type="Ensembl" id="ENST00000403458.9">
    <property type="protein sequence ID" value="ENSP00000384117.3"/>
    <property type="gene ID" value="ENSG00000159761.15"/>
</dbReference>
<dbReference type="GeneID" id="388284"/>
<dbReference type="KEGG" id="hsa:388284"/>
<dbReference type="MANE-Select" id="ENST00000403458.9">
    <property type="protein sequence ID" value="ENSP00000384117.3"/>
    <property type="RefSeq nucleotide sequence ID" value="NM_001012984.3"/>
    <property type="RefSeq protein sequence ID" value="NP_001013002.2"/>
</dbReference>
<dbReference type="UCSC" id="uc002ety.4">
    <property type="organism name" value="human"/>
</dbReference>
<dbReference type="AGR" id="HGNC:33755"/>
<dbReference type="CTD" id="388284"/>
<dbReference type="GeneCards" id="C16orf86"/>
<dbReference type="HGNC" id="HGNC:33755">
    <property type="gene designation" value="C16orf86"/>
</dbReference>
<dbReference type="HPA" id="ENSG00000159761">
    <property type="expression patterns" value="Group enriched (brain, testis)"/>
</dbReference>
<dbReference type="neXtProt" id="NX_Q6ZW13"/>
<dbReference type="OpenTargets" id="ENSG00000159761"/>
<dbReference type="PharmGKB" id="PA162378445"/>
<dbReference type="VEuPathDB" id="HostDB:ENSG00000159761"/>
<dbReference type="eggNOG" id="ENOG502SVW5">
    <property type="taxonomic scope" value="Eukaryota"/>
</dbReference>
<dbReference type="GeneTree" id="ENSGT00390000011138"/>
<dbReference type="HOGENOM" id="CLU_943194_0_0_1"/>
<dbReference type="InParanoid" id="Q6ZW13"/>
<dbReference type="OMA" id="VDINKML"/>
<dbReference type="OrthoDB" id="9389802at2759"/>
<dbReference type="PAN-GO" id="Q6ZW13">
    <property type="GO annotations" value="0 GO annotations based on evolutionary models"/>
</dbReference>
<dbReference type="PhylomeDB" id="Q6ZW13"/>
<dbReference type="TreeFam" id="TF337136"/>
<dbReference type="PathwayCommons" id="Q6ZW13"/>
<dbReference type="BioGRID-ORCS" id="388284">
    <property type="hits" value="59 hits in 1123 CRISPR screens"/>
</dbReference>
<dbReference type="ChiTaRS" id="C16orf86">
    <property type="organism name" value="human"/>
</dbReference>
<dbReference type="GenomeRNAi" id="388284"/>
<dbReference type="Pharos" id="Q6ZW13">
    <property type="development level" value="Tdark"/>
</dbReference>
<dbReference type="PRO" id="PR:Q6ZW13"/>
<dbReference type="Proteomes" id="UP000005640">
    <property type="component" value="Chromosome 16"/>
</dbReference>
<dbReference type="RNAct" id="Q6ZW13">
    <property type="molecule type" value="protein"/>
</dbReference>
<dbReference type="Bgee" id="ENSG00000159761">
    <property type="expression patterns" value="Expressed in left testis and 119 other cell types or tissues"/>
</dbReference>
<dbReference type="ExpressionAtlas" id="Q6ZW13">
    <property type="expression patterns" value="baseline and differential"/>
</dbReference>
<dbReference type="InterPro" id="IPR031516">
    <property type="entry name" value="DUF4691"/>
</dbReference>
<dbReference type="PANTHER" id="PTHR37867">
    <property type="entry name" value="CHROMOSOME 16 OPEN READING FRAME 86"/>
    <property type="match status" value="1"/>
</dbReference>
<dbReference type="PANTHER" id="PTHR37867:SF1">
    <property type="entry name" value="CHROMOSOME 16 OPEN READING FRAME 86"/>
    <property type="match status" value="1"/>
</dbReference>
<dbReference type="Pfam" id="PF15762">
    <property type="entry name" value="DUF4691"/>
    <property type="match status" value="1"/>
</dbReference>